<proteinExistence type="evidence at protein level"/>
<comment type="function">
    <text evidence="1">Component in a DNA repair pathway. Removal of UV LIGHT damaged nucleotides. Recognizes pyrimidine dimers and cleave a phosphodiester bond immediately 5' to the lesion.</text>
</comment>
<comment type="cofactor">
    <cofactor>
        <name>Mn(2+)</name>
        <dbReference type="ChEBI" id="CHEBI:29035"/>
    </cofactor>
</comment>
<comment type="similarity">
    <text evidence="2">Belongs to the uve1/UvsE family.</text>
</comment>
<comment type="sequence caution" evidence="2">
    <conflict type="erroneous initiation">
        <sequence resource="EMBL-CDS" id="AAF11370"/>
    </conflict>
</comment>
<name>UVSE_DEIRA</name>
<accession>Q9RTE6</accession>
<accession>Q9S0M9</accession>
<gene>
    <name type="primary">uvsE</name>
    <name type="ordered locus">DR_1819</name>
</gene>
<organism>
    <name type="scientific">Deinococcus radiodurans (strain ATCC 13939 / DSM 20539 / JCM 16871 / CCUG 27074 / LMG 4051 / NBRC 15346 / NCIMB 9279 / VKM B-1422 / R1)</name>
    <dbReference type="NCBI Taxonomy" id="243230"/>
    <lineage>
        <taxon>Bacteria</taxon>
        <taxon>Thermotogati</taxon>
        <taxon>Deinococcota</taxon>
        <taxon>Deinococci</taxon>
        <taxon>Deinococcales</taxon>
        <taxon>Deinococcaceae</taxon>
        <taxon>Deinococcus</taxon>
    </lineage>
</organism>
<reference key="1">
    <citation type="submission" date="1999-10" db="EMBL/GenBank/DDBJ databases">
        <title>Cloning of structural gene of an alternative incision enzyme for DNA damage in Deinococcus radiodurans.</title>
        <authorList>
            <person name="Kitayama S."/>
            <person name="Kikuchi M."/>
            <person name="Funayama T."/>
            <person name="Narumi I."/>
            <person name="Watanabe H."/>
        </authorList>
    </citation>
    <scope>NUCLEOTIDE SEQUENCE [GENOMIC DNA]</scope>
    <source>
        <strain>KR1</strain>
    </source>
</reference>
<reference key="2">
    <citation type="journal article" date="1999" name="Science">
        <title>Genome sequence of the radioresistant bacterium Deinococcus radiodurans R1.</title>
        <authorList>
            <person name="White O."/>
            <person name="Eisen J.A."/>
            <person name="Heidelberg J.F."/>
            <person name="Hickey E.K."/>
            <person name="Peterson J.D."/>
            <person name="Dodson R.J."/>
            <person name="Haft D.H."/>
            <person name="Gwinn M.L."/>
            <person name="Nelson W.C."/>
            <person name="Richardson D.L."/>
            <person name="Moffat K.S."/>
            <person name="Qin H."/>
            <person name="Jiang L."/>
            <person name="Pamphile W."/>
            <person name="Crosby M."/>
            <person name="Shen M."/>
            <person name="Vamathevan J.J."/>
            <person name="Lam P."/>
            <person name="McDonald L.A."/>
            <person name="Utterback T.R."/>
            <person name="Zalewski C."/>
            <person name="Makarova K.S."/>
            <person name="Aravind L."/>
            <person name="Daly M.J."/>
            <person name="Minton K.W."/>
            <person name="Fleischmann R.D."/>
            <person name="Ketchum K.A."/>
            <person name="Nelson K.E."/>
            <person name="Salzberg S.L."/>
            <person name="Smith H.O."/>
            <person name="Venter J.C."/>
            <person name="Fraser C.M."/>
        </authorList>
    </citation>
    <scope>NUCLEOTIDE SEQUENCE [LARGE SCALE GENOMIC DNA]</scope>
    <source>
        <strain>ATCC 13939 / DSM 20539 / JCM 16871 / CCUG 27074 / LMG 4051 / NBRC 15346 / NCIMB 9279 / VKM B-1422 / R1</strain>
    </source>
</reference>
<reference key="3">
    <citation type="journal article" date="2002" name="J. Bacteriol.">
        <title>Genetic evidence that the uvsE gene product of Deinococcus radiodurans R1 is a UV damage endonuclease.</title>
        <authorList>
            <person name="Earl A.M."/>
            <person name="Rankin S.K."/>
            <person name="Kim K.-P."/>
            <person name="Lamendola O.N."/>
            <person name="Battista J.R."/>
        </authorList>
    </citation>
    <scope>FUNCTION</scope>
    <source>
        <strain>ATCC 13939 / DSM 20539 / JCM 16871 / CCUG 27074 / LMG 4051 / NBRC 15346 / NCIMB 9279 / VKM B-1422 / R1</strain>
    </source>
</reference>
<reference key="4">
    <citation type="journal article" date="1985" name="Mutat. Res.">
        <title>Identification and initial characterisation of a pyrimidine dimer UV endonuclease (UV endonuclease beta) from Deinococcus radiodurans; a DNA-repair enzyme that requires manganese ions.</title>
        <authorList>
            <person name="Evans D.M."/>
            <person name="Moseley B.E."/>
        </authorList>
    </citation>
    <scope>CHARACTERIZATION</scope>
</reference>
<evidence type="ECO:0000269" key="1">
    <source>
    </source>
</evidence>
<evidence type="ECO:0000305" key="2"/>
<protein>
    <recommendedName>
        <fullName>UV DNA damage endonuclease</fullName>
        <shortName>UV-endonuclease</shortName>
        <shortName>UVED</shortName>
        <ecNumber>3.-.-.-</ecNumber>
    </recommendedName>
    <alternativeName>
        <fullName>Endonuclease beta</fullName>
    </alternativeName>
</protein>
<dbReference type="EC" id="3.-.-.-"/>
<dbReference type="EMBL" id="AB033747">
    <property type="protein sequence ID" value="BAA85759.1"/>
    <property type="molecule type" value="Genomic_DNA"/>
</dbReference>
<dbReference type="EMBL" id="AE000513">
    <property type="protein sequence ID" value="AAF11370.1"/>
    <property type="status" value="ALT_INIT"/>
    <property type="molecule type" value="Genomic_DNA"/>
</dbReference>
<dbReference type="PIR" id="C75350">
    <property type="entry name" value="C75350"/>
</dbReference>
<dbReference type="RefSeq" id="NP_295542.1">
    <property type="nucleotide sequence ID" value="NC_001263.1"/>
</dbReference>
<dbReference type="RefSeq" id="WP_034350019.1">
    <property type="nucleotide sequence ID" value="NC_001263.1"/>
</dbReference>
<dbReference type="SMR" id="Q9RTE6"/>
<dbReference type="FunCoup" id="Q9RTE6">
    <property type="interactions" value="9"/>
</dbReference>
<dbReference type="STRING" id="243230.DR_1819"/>
<dbReference type="PaxDb" id="243230-DR_1819"/>
<dbReference type="EnsemblBacteria" id="AAF11370">
    <property type="protein sequence ID" value="AAF11370"/>
    <property type="gene ID" value="DR_1819"/>
</dbReference>
<dbReference type="GeneID" id="69518060"/>
<dbReference type="KEGG" id="dra:DR_1819"/>
<dbReference type="PATRIC" id="fig|243230.17.peg.2031"/>
<dbReference type="eggNOG" id="COG4294">
    <property type="taxonomic scope" value="Bacteria"/>
</dbReference>
<dbReference type="HOGENOM" id="CLU_017168_0_2_0"/>
<dbReference type="InParanoid" id="Q9RTE6"/>
<dbReference type="OrthoDB" id="9782576at2"/>
<dbReference type="Proteomes" id="UP000002524">
    <property type="component" value="Chromosome 1"/>
</dbReference>
<dbReference type="GO" id="GO:0004519">
    <property type="term" value="F:endonuclease activity"/>
    <property type="evidence" value="ECO:0007669"/>
    <property type="project" value="UniProtKB-UniRule"/>
</dbReference>
<dbReference type="GO" id="GO:0006289">
    <property type="term" value="P:nucleotide-excision repair"/>
    <property type="evidence" value="ECO:0007669"/>
    <property type="project" value="InterPro"/>
</dbReference>
<dbReference type="GO" id="GO:0006290">
    <property type="term" value="P:pyrimidine dimer repair"/>
    <property type="evidence" value="ECO:0007669"/>
    <property type="project" value="UniProtKB-UniRule"/>
</dbReference>
<dbReference type="GO" id="GO:0009411">
    <property type="term" value="P:response to UV"/>
    <property type="evidence" value="ECO:0007669"/>
    <property type="project" value="InterPro"/>
</dbReference>
<dbReference type="Gene3D" id="3.20.20.150">
    <property type="entry name" value="Divalent-metal-dependent TIM barrel enzymes"/>
    <property type="match status" value="1"/>
</dbReference>
<dbReference type="HAMAP" id="MF_00606">
    <property type="entry name" value="UV_endonuclease"/>
    <property type="match status" value="1"/>
</dbReference>
<dbReference type="InterPro" id="IPR004601">
    <property type="entry name" value="UvdE"/>
</dbReference>
<dbReference type="InterPro" id="IPR023520">
    <property type="entry name" value="UvdE_bac"/>
</dbReference>
<dbReference type="InterPro" id="IPR036237">
    <property type="entry name" value="Xyl_isomerase-like_sf"/>
</dbReference>
<dbReference type="NCBIfam" id="NF002640">
    <property type="entry name" value="PRK02308.1-4"/>
    <property type="match status" value="1"/>
</dbReference>
<dbReference type="PANTHER" id="PTHR31290">
    <property type="entry name" value="UV-DAMAGE ENDONUCLEASE"/>
    <property type="match status" value="1"/>
</dbReference>
<dbReference type="PANTHER" id="PTHR31290:SF5">
    <property type="entry name" value="UV-DAMAGE ENDONUCLEASE"/>
    <property type="match status" value="1"/>
</dbReference>
<dbReference type="Pfam" id="PF03851">
    <property type="entry name" value="UvdE"/>
    <property type="match status" value="1"/>
</dbReference>
<dbReference type="SUPFAM" id="SSF51658">
    <property type="entry name" value="Xylose isomerase-like"/>
    <property type="match status" value="1"/>
</dbReference>
<keyword id="KW-0227">DNA damage</keyword>
<keyword id="KW-0228">DNA excision</keyword>
<keyword id="KW-0234">DNA repair</keyword>
<keyword id="KW-0255">Endonuclease</keyword>
<keyword id="KW-0378">Hydrolase</keyword>
<keyword id="KW-0464">Manganese</keyword>
<keyword id="KW-0540">Nuclease</keyword>
<keyword id="KW-1185">Reference proteome</keyword>
<sequence>MTSACEAVPQLGLVCLTVGPEVRFRTVTLSRYRALSPAEREAKLLDLYSSNIKTLRGAADYCAAHDIRLYRLSSSLFPMLDLAGDDTGAAVLTHLAPQLLEAGHAFTDAGVRLLMHPEQFIVLNSDRPEVRESSVRAMSAHARVMDGLGLARTPWNLLLLHGGKGGRGAELAALIPDLPDPVRLRLGLENDERAYSPAELLPICEATGTPLVFDAHHHVVHDKLPDQEDPSVREWVLRARATWQPPEWQVVHLSNGIEGPQDRRHSHLIADFPSAYADVPWIEVEAKGKEEAIAALRLMAPFKKD</sequence>
<feature type="chain" id="PRO_0000215036" description="UV DNA damage endonuclease">
    <location>
        <begin position="1"/>
        <end position="305"/>
    </location>
</feature>